<protein>
    <recommendedName>
        <fullName>Putative K(+) efflux antiporter KefB</fullName>
    </recommendedName>
</protein>
<keyword id="KW-0050">Antiport</keyword>
<keyword id="KW-1003">Cell membrane</keyword>
<keyword id="KW-0406">Ion transport</keyword>
<keyword id="KW-0472">Membrane</keyword>
<keyword id="KW-0630">Potassium</keyword>
<keyword id="KW-0633">Potassium transport</keyword>
<keyword id="KW-0812">Transmembrane</keyword>
<keyword id="KW-1133">Transmembrane helix</keyword>
<keyword id="KW-0813">Transport</keyword>
<organism>
    <name type="scientific">Alkalimonas amylolytica</name>
    <dbReference type="NCBI Taxonomy" id="152573"/>
    <lineage>
        <taxon>Bacteria</taxon>
        <taxon>Pseudomonadati</taxon>
        <taxon>Pseudomonadota</taxon>
        <taxon>Gammaproteobacteria</taxon>
        <taxon>Alkalimonas</taxon>
    </lineage>
</organism>
<evidence type="ECO:0000255" key="1"/>
<evidence type="ECO:0000255" key="2">
    <source>
        <dbReference type="PROSITE-ProRule" id="PRU00543"/>
    </source>
</evidence>
<evidence type="ECO:0000255" key="3">
    <source>
        <dbReference type="PROSITE-ProRule" id="PRU00544"/>
    </source>
</evidence>
<evidence type="ECO:0000269" key="4">
    <source>
    </source>
</evidence>
<evidence type="ECO:0000305" key="5"/>
<gene>
    <name type="primary">kefB</name>
    <name type="synonym">napA</name>
</gene>
<accession>Q0ZAH7</accession>
<reference key="1">
    <citation type="journal article" date="2007" name="Microbiology">
        <title>Three putative cation/proton antiporters from the soda lake alkaliphile Alkalimonas amylolytica N10 complement an alkali-sensitive Escherichia coli mutant.</title>
        <authorList>
            <person name="Wei Y."/>
            <person name="Liu J."/>
            <person name="Ma Y."/>
            <person name="Krulwich T.A."/>
        </authorList>
    </citation>
    <scope>NUCLEOTIDE SEQUENCE [GENOMIC DNA]</scope>
    <scope>FUNCTION</scope>
    <scope>GENE NAME</scope>
    <source>
        <strain>DSM 18337 / CGMCC 1.3430 / N10</strain>
    </source>
</reference>
<feature type="chain" id="PRO_0000425722" description="Putative K(+) efflux antiporter KefB">
    <location>
        <begin position="1"/>
        <end position="661"/>
    </location>
</feature>
<feature type="transmembrane region" description="Helical" evidence="1">
    <location>
        <begin position="5"/>
        <end position="25"/>
    </location>
</feature>
<feature type="transmembrane region" description="Helical" evidence="1">
    <location>
        <begin position="31"/>
        <end position="51"/>
    </location>
</feature>
<feature type="transmembrane region" description="Helical" evidence="1">
    <location>
        <begin position="53"/>
        <end position="73"/>
    </location>
</feature>
<feature type="transmembrane region" description="Helical" evidence="1">
    <location>
        <begin position="100"/>
        <end position="120"/>
    </location>
</feature>
<feature type="transmembrane region" description="Helical" evidence="1">
    <location>
        <begin position="154"/>
        <end position="174"/>
    </location>
</feature>
<feature type="transmembrane region" description="Helical" evidence="1">
    <location>
        <begin position="178"/>
        <end position="198"/>
    </location>
</feature>
<feature type="transmembrane region" description="Helical" evidence="1">
    <location>
        <begin position="224"/>
        <end position="244"/>
    </location>
</feature>
<feature type="transmembrane region" description="Helical" evidence="1">
    <location>
        <begin position="273"/>
        <end position="293"/>
    </location>
</feature>
<feature type="transmembrane region" description="Helical" evidence="1">
    <location>
        <begin position="296"/>
        <end position="316"/>
    </location>
</feature>
<feature type="transmembrane region" description="Helical" evidence="1">
    <location>
        <begin position="330"/>
        <end position="350"/>
    </location>
</feature>
<feature type="transmembrane region" description="Helical" evidence="1">
    <location>
        <begin position="360"/>
        <end position="380"/>
    </location>
</feature>
<feature type="domain" description="RCK N-terminal" evidence="2">
    <location>
        <begin position="410"/>
        <end position="527"/>
    </location>
</feature>
<feature type="domain" description="RCK C-terminal" evidence="3">
    <location>
        <begin position="571"/>
        <end position="656"/>
    </location>
</feature>
<proteinExistence type="inferred from homology"/>
<dbReference type="EMBL" id="DQ649019">
    <property type="protein sequence ID" value="ABG37986.1"/>
    <property type="molecule type" value="Genomic_DNA"/>
</dbReference>
<dbReference type="SMR" id="Q0ZAH7"/>
<dbReference type="STRING" id="152573.SAMN04488051_10349"/>
<dbReference type="TCDB" id="2.A.37.1.3">
    <property type="family name" value="the monovalent cation:proton antiporter-2 (cpa2) family"/>
</dbReference>
<dbReference type="GO" id="GO:0005886">
    <property type="term" value="C:plasma membrane"/>
    <property type="evidence" value="ECO:0007669"/>
    <property type="project" value="UniProtKB-SubCell"/>
</dbReference>
<dbReference type="GO" id="GO:0015297">
    <property type="term" value="F:antiporter activity"/>
    <property type="evidence" value="ECO:0007669"/>
    <property type="project" value="UniProtKB-KW"/>
</dbReference>
<dbReference type="GO" id="GO:0008324">
    <property type="term" value="F:monoatomic cation transmembrane transporter activity"/>
    <property type="evidence" value="ECO:0007669"/>
    <property type="project" value="InterPro"/>
</dbReference>
<dbReference type="GO" id="GO:0006813">
    <property type="term" value="P:potassium ion transport"/>
    <property type="evidence" value="ECO:0007669"/>
    <property type="project" value="UniProtKB-KW"/>
</dbReference>
<dbReference type="GO" id="GO:1902600">
    <property type="term" value="P:proton transmembrane transport"/>
    <property type="evidence" value="ECO:0007669"/>
    <property type="project" value="InterPro"/>
</dbReference>
<dbReference type="FunFam" id="3.40.50.720:FF:000036">
    <property type="entry name" value="Glutathione-regulated potassium-efflux system protein KefB"/>
    <property type="match status" value="1"/>
</dbReference>
<dbReference type="Gene3D" id="1.20.1530.20">
    <property type="match status" value="1"/>
</dbReference>
<dbReference type="Gene3D" id="3.40.50.720">
    <property type="entry name" value="NAD(P)-binding Rossmann-like Domain"/>
    <property type="match status" value="1"/>
</dbReference>
<dbReference type="Gene3D" id="3.30.70.1450">
    <property type="entry name" value="Regulator of K+ conductance, C-terminal domain"/>
    <property type="match status" value="1"/>
</dbReference>
<dbReference type="InterPro" id="IPR006153">
    <property type="entry name" value="Cation/H_exchanger_TM"/>
</dbReference>
<dbReference type="InterPro" id="IPR038770">
    <property type="entry name" value="Na+/solute_symporter_sf"/>
</dbReference>
<dbReference type="InterPro" id="IPR036291">
    <property type="entry name" value="NAD(P)-bd_dom_sf"/>
</dbReference>
<dbReference type="InterPro" id="IPR006037">
    <property type="entry name" value="RCK_C"/>
</dbReference>
<dbReference type="InterPro" id="IPR036721">
    <property type="entry name" value="RCK_C_sf"/>
</dbReference>
<dbReference type="InterPro" id="IPR003148">
    <property type="entry name" value="RCK_N"/>
</dbReference>
<dbReference type="PANTHER" id="PTHR46157">
    <property type="entry name" value="K(+) EFFLUX ANTIPORTER 3, CHLOROPLASTIC"/>
    <property type="match status" value="1"/>
</dbReference>
<dbReference type="PANTHER" id="PTHR46157:SF4">
    <property type="entry name" value="K(+) EFFLUX ANTIPORTER 3, CHLOROPLASTIC"/>
    <property type="match status" value="1"/>
</dbReference>
<dbReference type="Pfam" id="PF00999">
    <property type="entry name" value="Na_H_Exchanger"/>
    <property type="match status" value="1"/>
</dbReference>
<dbReference type="Pfam" id="PF02080">
    <property type="entry name" value="TrkA_C"/>
    <property type="match status" value="1"/>
</dbReference>
<dbReference type="Pfam" id="PF02254">
    <property type="entry name" value="TrkA_N"/>
    <property type="match status" value="1"/>
</dbReference>
<dbReference type="SUPFAM" id="SSF51735">
    <property type="entry name" value="NAD(P)-binding Rossmann-fold domains"/>
    <property type="match status" value="1"/>
</dbReference>
<dbReference type="SUPFAM" id="SSF116726">
    <property type="entry name" value="TrkA C-terminal domain-like"/>
    <property type="match status" value="1"/>
</dbReference>
<dbReference type="PROSITE" id="PS51202">
    <property type="entry name" value="RCK_C"/>
    <property type="match status" value="1"/>
</dbReference>
<dbReference type="PROSITE" id="PS51201">
    <property type="entry name" value="RCK_N"/>
    <property type="match status" value="1"/>
</dbReference>
<comment type="function">
    <text evidence="4">May operate as a K(+)/H(+) antiporter.</text>
</comment>
<comment type="subcellular location">
    <subcellularLocation>
        <location evidence="5">Cell membrane</location>
        <topology evidence="5">Multi-pass membrane protein</topology>
    </subcellularLocation>
</comment>
<comment type="similarity">
    <text evidence="5">Belongs to the monovalent cation:proton antiporter 2 (CPA2) transporter (TC 2.A.37) family. KEA (TC 2.A.37.1) subfamily.</text>
</comment>
<name>KEFB_ALKAM</name>
<sequence length="661" mass="71766">MLLDGTLIQLLFLLGFMVFMVMLFQRAHIPASIAYLLVGVLLGAHTAGPVISEGYIHKIAEFGIVFLLFTIGLRFSWQQIYQLRHTILGLGTAQVGLTTLLVALLLWAMGVASVVAFVIGAVFAQSSTTIISKQLLEQGEDQSRHGRLGISLSVFQDITAVPFIIVIPVLGVAMAQDIASTLGMALFKAVLATALVVLVGRYLLRHLFHRVSSSDSAELFTLTVLLVCLAAAWLTQSLGLSMAFGAFLAGMVMGETEFKLQVEAAIRPFRDVLLGIFFVSIGMLLDPMLLPEIGHIALAGALLLLLIKIVLVTALVLATGVALETAFRTGLILAVGGEFGFALLALALEGGTLDSRSSQIILTSVLLSMMLAVFLIRYNLQLSRFVVGRWIGQAAVSSEPFDDIEQHGLQQHVVIAGFGRIGQGVAQFLQKEQVPYIGLDLDAARVKNARLADVPVFYADSTDPDTLIAVGLAKARLLVISHEDLSAALTTLRHARTLHPDLPVIVRTRDESHVAELRQAGATEVIPETIEAGMMLTSHVLLMLNVPARRVNQLVQEQRINRYQLLRQQFRGSADLLKTQQQEQLKAVLLAEGSPAIDQSLQMLDLAQYGIQLTELVRAHNRIEQPSLDMVLQENDVLVLFGSAEALEQASLVLTHRLAAD</sequence>